<protein>
    <recommendedName>
        <fullName evidence="1">Histidinol-phosphate aminotransferase</fullName>
        <ecNumber evidence="1">2.6.1.9</ecNumber>
    </recommendedName>
    <alternativeName>
        <fullName evidence="1">Imidazole acetol-phosphate transaminase</fullName>
    </alternativeName>
</protein>
<reference key="1">
    <citation type="journal article" date="2003" name="Nature">
        <title>Unique physiological and pathogenic features of Leptospira interrogans revealed by whole-genome sequencing.</title>
        <authorList>
            <person name="Ren S.-X."/>
            <person name="Fu G."/>
            <person name="Jiang X.-G."/>
            <person name="Zeng R."/>
            <person name="Miao Y.-G."/>
            <person name="Xu H."/>
            <person name="Zhang Y.-X."/>
            <person name="Xiong H."/>
            <person name="Lu G."/>
            <person name="Lu L.-F."/>
            <person name="Jiang H.-Q."/>
            <person name="Jia J."/>
            <person name="Tu Y.-F."/>
            <person name="Jiang J.-X."/>
            <person name="Gu W.-Y."/>
            <person name="Zhang Y.-Q."/>
            <person name="Cai Z."/>
            <person name="Sheng H.-H."/>
            <person name="Yin H.-F."/>
            <person name="Zhang Y."/>
            <person name="Zhu G.-F."/>
            <person name="Wan M."/>
            <person name="Huang H.-L."/>
            <person name="Qian Z."/>
            <person name="Wang S.-Y."/>
            <person name="Ma W."/>
            <person name="Yao Z.-J."/>
            <person name="Shen Y."/>
            <person name="Qiang B.-Q."/>
            <person name="Xia Q.-C."/>
            <person name="Guo X.-K."/>
            <person name="Danchin A."/>
            <person name="Saint Girons I."/>
            <person name="Somerville R.L."/>
            <person name="Wen Y.-M."/>
            <person name="Shi M.-H."/>
            <person name="Chen Z."/>
            <person name="Xu J.-G."/>
            <person name="Zhao G.-P."/>
        </authorList>
    </citation>
    <scope>NUCLEOTIDE SEQUENCE [LARGE SCALE GENOMIC DNA]</scope>
    <source>
        <strain>56601</strain>
    </source>
</reference>
<dbReference type="EC" id="2.6.1.9" evidence="1"/>
<dbReference type="EMBL" id="AE010300">
    <property type="protein sequence ID" value="AAN48380.1"/>
    <property type="molecule type" value="Genomic_DNA"/>
</dbReference>
<dbReference type="RefSeq" id="NP_711362.1">
    <property type="nucleotide sequence ID" value="NC_004342.2"/>
</dbReference>
<dbReference type="RefSeq" id="WP_000538654.1">
    <property type="nucleotide sequence ID" value="NC_004342.2"/>
</dbReference>
<dbReference type="SMR" id="Q8F6W9"/>
<dbReference type="FunCoup" id="Q8F6W9">
    <property type="interactions" value="431"/>
</dbReference>
<dbReference type="STRING" id="189518.LA_1182"/>
<dbReference type="PaxDb" id="189518-LA_1182"/>
<dbReference type="EnsemblBacteria" id="AAN48380">
    <property type="protein sequence ID" value="AAN48380"/>
    <property type="gene ID" value="LA_1182"/>
</dbReference>
<dbReference type="GeneID" id="61142385"/>
<dbReference type="KEGG" id="lil:LA_1182"/>
<dbReference type="PATRIC" id="fig|189518.3.peg.1176"/>
<dbReference type="HOGENOM" id="CLU_017584_3_3_12"/>
<dbReference type="InParanoid" id="Q8F6W9"/>
<dbReference type="OrthoDB" id="9813612at2"/>
<dbReference type="UniPathway" id="UPA00031">
    <property type="reaction ID" value="UER00012"/>
</dbReference>
<dbReference type="Proteomes" id="UP000001408">
    <property type="component" value="Chromosome I"/>
</dbReference>
<dbReference type="GO" id="GO:0004400">
    <property type="term" value="F:histidinol-phosphate transaminase activity"/>
    <property type="evidence" value="ECO:0007669"/>
    <property type="project" value="UniProtKB-UniRule"/>
</dbReference>
<dbReference type="GO" id="GO:0030170">
    <property type="term" value="F:pyridoxal phosphate binding"/>
    <property type="evidence" value="ECO:0007669"/>
    <property type="project" value="InterPro"/>
</dbReference>
<dbReference type="GO" id="GO:0000105">
    <property type="term" value="P:L-histidine biosynthetic process"/>
    <property type="evidence" value="ECO:0007669"/>
    <property type="project" value="UniProtKB-UniRule"/>
</dbReference>
<dbReference type="CDD" id="cd00609">
    <property type="entry name" value="AAT_like"/>
    <property type="match status" value="1"/>
</dbReference>
<dbReference type="Gene3D" id="3.90.1150.10">
    <property type="entry name" value="Aspartate Aminotransferase, domain 1"/>
    <property type="match status" value="1"/>
</dbReference>
<dbReference type="Gene3D" id="3.40.640.10">
    <property type="entry name" value="Type I PLP-dependent aspartate aminotransferase-like (Major domain)"/>
    <property type="match status" value="1"/>
</dbReference>
<dbReference type="HAMAP" id="MF_01023">
    <property type="entry name" value="HisC_aminotrans_2"/>
    <property type="match status" value="1"/>
</dbReference>
<dbReference type="InterPro" id="IPR004839">
    <property type="entry name" value="Aminotransferase_I/II_large"/>
</dbReference>
<dbReference type="InterPro" id="IPR005861">
    <property type="entry name" value="HisP_aminotrans"/>
</dbReference>
<dbReference type="InterPro" id="IPR015424">
    <property type="entry name" value="PyrdxlP-dep_Trfase"/>
</dbReference>
<dbReference type="InterPro" id="IPR015421">
    <property type="entry name" value="PyrdxlP-dep_Trfase_major"/>
</dbReference>
<dbReference type="InterPro" id="IPR015422">
    <property type="entry name" value="PyrdxlP-dep_Trfase_small"/>
</dbReference>
<dbReference type="NCBIfam" id="TIGR01141">
    <property type="entry name" value="hisC"/>
    <property type="match status" value="1"/>
</dbReference>
<dbReference type="PANTHER" id="PTHR42885:SF2">
    <property type="entry name" value="HISTIDINOL-PHOSPHATE AMINOTRANSFERASE"/>
    <property type="match status" value="1"/>
</dbReference>
<dbReference type="PANTHER" id="PTHR42885">
    <property type="entry name" value="HISTIDINOL-PHOSPHATE AMINOTRANSFERASE-RELATED"/>
    <property type="match status" value="1"/>
</dbReference>
<dbReference type="Pfam" id="PF00155">
    <property type="entry name" value="Aminotran_1_2"/>
    <property type="match status" value="1"/>
</dbReference>
<dbReference type="SUPFAM" id="SSF53383">
    <property type="entry name" value="PLP-dependent transferases"/>
    <property type="match status" value="1"/>
</dbReference>
<accession>Q8F6W9</accession>
<proteinExistence type="inferred from homology"/>
<comment type="catalytic activity">
    <reaction evidence="1">
        <text>L-histidinol phosphate + 2-oxoglutarate = 3-(imidazol-4-yl)-2-oxopropyl phosphate + L-glutamate</text>
        <dbReference type="Rhea" id="RHEA:23744"/>
        <dbReference type="ChEBI" id="CHEBI:16810"/>
        <dbReference type="ChEBI" id="CHEBI:29985"/>
        <dbReference type="ChEBI" id="CHEBI:57766"/>
        <dbReference type="ChEBI" id="CHEBI:57980"/>
        <dbReference type="EC" id="2.6.1.9"/>
    </reaction>
</comment>
<comment type="cofactor">
    <cofactor evidence="1">
        <name>pyridoxal 5'-phosphate</name>
        <dbReference type="ChEBI" id="CHEBI:597326"/>
    </cofactor>
</comment>
<comment type="pathway">
    <text evidence="1">Amino-acid biosynthesis; L-histidine biosynthesis; L-histidine from 5-phospho-alpha-D-ribose 1-diphosphate: step 7/9.</text>
</comment>
<comment type="subunit">
    <text evidence="1">Homodimer.</text>
</comment>
<comment type="similarity">
    <text evidence="1">Belongs to the class-II pyridoxal-phosphate-dependent aminotransferase family. Histidinol-phosphate aminotransferase subfamily.</text>
</comment>
<name>HIS8_LEPIN</name>
<organism>
    <name type="scientific">Leptospira interrogans serogroup Icterohaemorrhagiae serovar Lai (strain 56601)</name>
    <dbReference type="NCBI Taxonomy" id="189518"/>
    <lineage>
        <taxon>Bacteria</taxon>
        <taxon>Pseudomonadati</taxon>
        <taxon>Spirochaetota</taxon>
        <taxon>Spirochaetia</taxon>
        <taxon>Leptospirales</taxon>
        <taxon>Leptospiraceae</taxon>
        <taxon>Leptospira</taxon>
    </lineage>
</organism>
<gene>
    <name evidence="1" type="primary">hisC</name>
    <name type="ordered locus">LA_1182</name>
</gene>
<feature type="chain" id="PRO_0000153383" description="Histidinol-phosphate aminotransferase">
    <location>
        <begin position="1"/>
        <end position="370"/>
    </location>
</feature>
<feature type="modified residue" description="N6-(pyridoxal phosphate)lysine" evidence="1">
    <location>
        <position position="230"/>
    </location>
</feature>
<sequence length="370" mass="41605">MGVMIPFRSILNSLKSYEAGKPIELVVREFGIDPNRIIKLGSNENPFGCAESVMEVVRQAISKMSFYPDDSYLDLKTAIASKFDLTTDRIIPGNGSDQVLDFVCRCVLDQGDSVLINRITFAMYKIYALQCGAKIHSTDSVTHDLNAFLDLAKLIRPKIIFLCTPSNPAGDALSKSDVYEFLSKISLDTLVVIDAAYMEFGKKKDPNKFIPAKEVTDLFPNVFYTGTFSKVYGLGGMRIGYGIGNQELISNLYKMRPPFSVTNLSALAATEALKNESYVESYLENNWNEMKRYEKFAAEQSIEFIDSYANFITFFARKRGKSSSEIAHSLLKQGIILRDLKNYDLNALRITIGRPEQNDLVLEALEKEFH</sequence>
<keyword id="KW-0028">Amino-acid biosynthesis</keyword>
<keyword id="KW-0032">Aminotransferase</keyword>
<keyword id="KW-0368">Histidine biosynthesis</keyword>
<keyword id="KW-0663">Pyridoxal phosphate</keyword>
<keyword id="KW-1185">Reference proteome</keyword>
<keyword id="KW-0808">Transferase</keyword>
<evidence type="ECO:0000255" key="1">
    <source>
        <dbReference type="HAMAP-Rule" id="MF_01023"/>
    </source>
</evidence>